<feature type="chain" id="PRO_1000069443" description="Probable L-tyrosine/L-aspartate decarboxylase">
    <location>
        <begin position="1"/>
        <end position="390"/>
    </location>
</feature>
<feature type="modified residue" description="N6-(pyridoxal phosphate)lysine" evidence="1">
    <location>
        <position position="239"/>
    </location>
</feature>
<reference key="1">
    <citation type="submission" date="2007-06" db="EMBL/GenBank/DDBJ databases">
        <title>Complete sequence of Methanococcus aeolicus Nankai-3.</title>
        <authorList>
            <consortium name="US DOE Joint Genome Institute"/>
            <person name="Copeland A."/>
            <person name="Lucas S."/>
            <person name="Lapidus A."/>
            <person name="Barry K."/>
            <person name="Glavina del Rio T."/>
            <person name="Dalin E."/>
            <person name="Tice H."/>
            <person name="Pitluck S."/>
            <person name="Chain P."/>
            <person name="Malfatti S."/>
            <person name="Shin M."/>
            <person name="Vergez L."/>
            <person name="Schmutz J."/>
            <person name="Larimer F."/>
            <person name="Land M."/>
            <person name="Hauser L."/>
            <person name="Kyrpides N."/>
            <person name="Lykidis A."/>
            <person name="Sieprawska-Lupa M."/>
            <person name="Whitman W.B."/>
            <person name="Richardson P."/>
        </authorList>
    </citation>
    <scope>NUCLEOTIDE SEQUENCE [LARGE SCALE GENOMIC DNA]</scope>
    <source>
        <strain>ATCC BAA-1280 / DSM 17508 / OCM 812 / Nankai-3</strain>
    </source>
</reference>
<comment type="function">
    <text evidence="1">Catalyzes the decarboxylation of L-tyrosine to produce tyramine for methanofuran biosynthesis. Can also catalyze the decarboxylation of L-aspartate to produce beta-alanine for coenzyme A (CoA) biosynthesis.</text>
</comment>
<comment type="catalytic activity">
    <reaction evidence="1">
        <text>L-tyrosine + H(+) = tyramine + CO2</text>
        <dbReference type="Rhea" id="RHEA:14345"/>
        <dbReference type="ChEBI" id="CHEBI:15378"/>
        <dbReference type="ChEBI" id="CHEBI:16526"/>
        <dbReference type="ChEBI" id="CHEBI:58315"/>
        <dbReference type="ChEBI" id="CHEBI:327995"/>
        <dbReference type="EC" id="4.1.1.25"/>
    </reaction>
</comment>
<comment type="catalytic activity">
    <reaction evidence="1">
        <text>L-aspartate + H(+) = beta-alanine + CO2</text>
        <dbReference type="Rhea" id="RHEA:19497"/>
        <dbReference type="ChEBI" id="CHEBI:15378"/>
        <dbReference type="ChEBI" id="CHEBI:16526"/>
        <dbReference type="ChEBI" id="CHEBI:29991"/>
        <dbReference type="ChEBI" id="CHEBI:57966"/>
        <dbReference type="EC" id="4.1.1.11"/>
    </reaction>
</comment>
<comment type="cofactor">
    <cofactor evidence="1">
        <name>pyridoxal 5'-phosphate</name>
        <dbReference type="ChEBI" id="CHEBI:597326"/>
    </cofactor>
</comment>
<comment type="pathway">
    <text evidence="1">Cofactor biosynthesis; methanofuran biosynthesis.</text>
</comment>
<comment type="pathway">
    <text evidence="1">Cofactor biosynthesis; coenzyme A biosynthesis.</text>
</comment>
<comment type="similarity">
    <text evidence="1">Belongs to the group II decarboxylase family. MfnA subfamily.</text>
</comment>
<sequence>MDERAVLEELKKYRKMDLKYEDGAILGSMCTKPHPITKKISDMFFETNLGDPGLFRGTKKLEDEVINNIGKFLNNPNPFGYIISGGTEANITAMRAINNIAKAKRKNHKTTVIMPETAHFSFEKAREMMDLNLITPPLTKYYTMDLKYINDFIEDRNNKNDISVDGIVGIAGCTELGAIDNIKELSKIAEQNNIFLHVDAAFGGFVIPFLDDKYKLDNYCYEFDFSLNGVKSMTVDPHKMGLAPIPAGGILFRDKSFKKYLDVEAPYLTDIHQATIIGTRSGVGVASTWGVMKLFGEEGYKNLASECMDKTHYLVKEAKKLGFKPVIDPVLNIVALEDDNPEETSLKLRKMGWFISICKCVKALRIIVMPHVEKEHIDKFLGALTEVKKN</sequence>
<dbReference type="EC" id="4.1.1.11" evidence="1"/>
<dbReference type="EC" id="4.1.1.25" evidence="1"/>
<dbReference type="EMBL" id="CP000743">
    <property type="protein sequence ID" value="ABR56586.1"/>
    <property type="molecule type" value="Genomic_DNA"/>
</dbReference>
<dbReference type="RefSeq" id="WP_011973718.1">
    <property type="nucleotide sequence ID" value="NC_009635.1"/>
</dbReference>
<dbReference type="SMR" id="A6UVR4"/>
<dbReference type="STRING" id="419665.Maeo_1008"/>
<dbReference type="GeneID" id="5326526"/>
<dbReference type="KEGG" id="mae:Maeo_1008"/>
<dbReference type="eggNOG" id="arCOG00027">
    <property type="taxonomic scope" value="Archaea"/>
</dbReference>
<dbReference type="HOGENOM" id="CLU_028929_2_1_2"/>
<dbReference type="OrthoDB" id="56891at2157"/>
<dbReference type="UniPathway" id="UPA00080"/>
<dbReference type="UniPathway" id="UPA00241"/>
<dbReference type="Proteomes" id="UP000001106">
    <property type="component" value="Chromosome"/>
</dbReference>
<dbReference type="GO" id="GO:0004068">
    <property type="term" value="F:aspartate 1-decarboxylase activity"/>
    <property type="evidence" value="ECO:0007669"/>
    <property type="project" value="UniProtKB-UniRule"/>
</dbReference>
<dbReference type="GO" id="GO:0030170">
    <property type="term" value="F:pyridoxal phosphate binding"/>
    <property type="evidence" value="ECO:0007669"/>
    <property type="project" value="UniProtKB-UniRule"/>
</dbReference>
<dbReference type="GO" id="GO:0004837">
    <property type="term" value="F:tyrosine decarboxylase activity"/>
    <property type="evidence" value="ECO:0007669"/>
    <property type="project" value="UniProtKB-UniRule"/>
</dbReference>
<dbReference type="GO" id="GO:0019752">
    <property type="term" value="P:carboxylic acid metabolic process"/>
    <property type="evidence" value="ECO:0007669"/>
    <property type="project" value="InterPro"/>
</dbReference>
<dbReference type="GO" id="GO:0015937">
    <property type="term" value="P:coenzyme A biosynthetic process"/>
    <property type="evidence" value="ECO:0007669"/>
    <property type="project" value="UniProtKB-UniRule"/>
</dbReference>
<dbReference type="GO" id="GO:2001120">
    <property type="term" value="P:methanofuran biosynthetic process"/>
    <property type="evidence" value="ECO:0007669"/>
    <property type="project" value="UniProtKB-UniRule"/>
</dbReference>
<dbReference type="Gene3D" id="3.90.1150.10">
    <property type="entry name" value="Aspartate Aminotransferase, domain 1"/>
    <property type="match status" value="1"/>
</dbReference>
<dbReference type="Gene3D" id="3.40.640.10">
    <property type="entry name" value="Type I PLP-dependent aspartate aminotransferase-like (Major domain)"/>
    <property type="match status" value="1"/>
</dbReference>
<dbReference type="HAMAP" id="MF_01610">
    <property type="entry name" value="MfnA_decarbox"/>
    <property type="match status" value="1"/>
</dbReference>
<dbReference type="InterPro" id="IPR050477">
    <property type="entry name" value="GrpII_AminoAcid_Decarb"/>
</dbReference>
<dbReference type="InterPro" id="IPR020931">
    <property type="entry name" value="MfnA"/>
</dbReference>
<dbReference type="InterPro" id="IPR002129">
    <property type="entry name" value="PyrdxlP-dep_de-COase"/>
</dbReference>
<dbReference type="InterPro" id="IPR015424">
    <property type="entry name" value="PyrdxlP-dep_Trfase"/>
</dbReference>
<dbReference type="InterPro" id="IPR015421">
    <property type="entry name" value="PyrdxlP-dep_Trfase_major"/>
</dbReference>
<dbReference type="InterPro" id="IPR015422">
    <property type="entry name" value="PyrdxlP-dep_Trfase_small"/>
</dbReference>
<dbReference type="InterPro" id="IPR021115">
    <property type="entry name" value="Pyridoxal-P_BS"/>
</dbReference>
<dbReference type="NCBIfam" id="TIGR03812">
    <property type="entry name" value="tyr_de_CO2_Arch"/>
    <property type="match status" value="1"/>
</dbReference>
<dbReference type="PANTHER" id="PTHR42735">
    <property type="match status" value="1"/>
</dbReference>
<dbReference type="PANTHER" id="PTHR42735:SF6">
    <property type="entry name" value="SPHINGOSINE-1-PHOSPHATE LYASE 1"/>
    <property type="match status" value="1"/>
</dbReference>
<dbReference type="Pfam" id="PF00282">
    <property type="entry name" value="Pyridoxal_deC"/>
    <property type="match status" value="1"/>
</dbReference>
<dbReference type="SUPFAM" id="SSF53383">
    <property type="entry name" value="PLP-dependent transferases"/>
    <property type="match status" value="1"/>
</dbReference>
<dbReference type="PROSITE" id="PS00392">
    <property type="entry name" value="DDC_GAD_HDC_YDC"/>
    <property type="match status" value="1"/>
</dbReference>
<organism>
    <name type="scientific">Methanococcus aeolicus (strain ATCC BAA-1280 / DSM 17508 / OCM 812 / Nankai-3)</name>
    <dbReference type="NCBI Taxonomy" id="419665"/>
    <lineage>
        <taxon>Archaea</taxon>
        <taxon>Methanobacteriati</taxon>
        <taxon>Methanobacteriota</taxon>
        <taxon>Methanomada group</taxon>
        <taxon>Methanococci</taxon>
        <taxon>Methanococcales</taxon>
        <taxon>Methanococcaceae</taxon>
        <taxon>Methanococcus</taxon>
    </lineage>
</organism>
<gene>
    <name evidence="1" type="primary">mfnA</name>
    <name type="ordered locus">Maeo_1008</name>
</gene>
<evidence type="ECO:0000255" key="1">
    <source>
        <dbReference type="HAMAP-Rule" id="MF_01610"/>
    </source>
</evidence>
<protein>
    <recommendedName>
        <fullName evidence="1">Probable L-tyrosine/L-aspartate decarboxylase</fullName>
        <shortName evidence="1">TDC/ADC</shortName>
        <ecNumber evidence="1">4.1.1.11</ecNumber>
        <ecNumber evidence="1">4.1.1.25</ecNumber>
    </recommendedName>
</protein>
<proteinExistence type="inferred from homology"/>
<keyword id="KW-0210">Decarboxylase</keyword>
<keyword id="KW-0456">Lyase</keyword>
<keyword id="KW-0663">Pyridoxal phosphate</keyword>
<accession>A6UVR4</accession>
<name>MFNA_META3</name>